<feature type="chain" id="PRO_0000376837" description="MND1-interacting protein 1">
    <location>
        <begin position="1"/>
        <end position="711"/>
    </location>
</feature>
<feature type="zinc finger region" description="RING-type" evidence="2">
    <location>
        <begin position="653"/>
        <end position="697"/>
    </location>
</feature>
<feature type="region of interest" description="Disordered" evidence="3">
    <location>
        <begin position="552"/>
        <end position="571"/>
    </location>
</feature>
<feature type="region of interest" description="Disordered" evidence="3">
    <location>
        <begin position="602"/>
        <end position="622"/>
    </location>
</feature>
<feature type="coiled-coil region" evidence="1">
    <location>
        <begin position="390"/>
        <end position="648"/>
    </location>
</feature>
<feature type="compositionally biased region" description="Basic and acidic residues" evidence="3">
    <location>
        <begin position="602"/>
        <end position="611"/>
    </location>
</feature>
<organism>
    <name type="scientific">Arabidopsis thaliana</name>
    <name type="common">Mouse-ear cress</name>
    <dbReference type="NCBI Taxonomy" id="3702"/>
    <lineage>
        <taxon>Eukaryota</taxon>
        <taxon>Viridiplantae</taxon>
        <taxon>Streptophyta</taxon>
        <taxon>Embryophyta</taxon>
        <taxon>Tracheophyta</taxon>
        <taxon>Spermatophyta</taxon>
        <taxon>Magnoliopsida</taxon>
        <taxon>eudicotyledons</taxon>
        <taxon>Gunneridae</taxon>
        <taxon>Pentapetalae</taxon>
        <taxon>rosids</taxon>
        <taxon>malvids</taxon>
        <taxon>Brassicales</taxon>
        <taxon>Brassicaceae</taxon>
        <taxon>Camelineae</taxon>
        <taxon>Arabidopsis</taxon>
    </lineage>
</organism>
<name>MIP1_ARATH</name>
<protein>
    <recommendedName>
        <fullName>MND1-interacting protein 1</fullName>
        <shortName>AtMIP1</shortName>
    </recommendedName>
</protein>
<dbReference type="EMBL" id="AC007767">
    <property type="protein sequence ID" value="AAF81351.1"/>
    <property type="status" value="ALT_SEQ"/>
    <property type="molecule type" value="Genomic_DNA"/>
</dbReference>
<dbReference type="EMBL" id="AC055769">
    <property type="protein sequence ID" value="AAG51242.1"/>
    <property type="molecule type" value="Genomic_DNA"/>
</dbReference>
<dbReference type="EMBL" id="CP002684">
    <property type="protein sequence ID" value="AEE31497.1"/>
    <property type="molecule type" value="Genomic_DNA"/>
</dbReference>
<dbReference type="EMBL" id="AY090954">
    <property type="protein sequence ID" value="AAM14000.1"/>
    <property type="molecule type" value="mRNA"/>
</dbReference>
<dbReference type="EMBL" id="AY133855">
    <property type="protein sequence ID" value="AAM91789.1"/>
    <property type="molecule type" value="mRNA"/>
</dbReference>
<dbReference type="PIR" id="G86450">
    <property type="entry name" value="G86450"/>
</dbReference>
<dbReference type="RefSeq" id="NP_174531.1">
    <property type="nucleotide sequence ID" value="NM_102988.5"/>
</dbReference>
<dbReference type="SMR" id="Q8RX22"/>
<dbReference type="BioGRID" id="25381">
    <property type="interactions" value="4"/>
</dbReference>
<dbReference type="DIP" id="DIP-54876N"/>
<dbReference type="FunCoup" id="Q8RX22">
    <property type="interactions" value="380"/>
</dbReference>
<dbReference type="IntAct" id="Q8RX22">
    <property type="interactions" value="4"/>
</dbReference>
<dbReference type="STRING" id="3702.Q8RX22"/>
<dbReference type="iPTMnet" id="Q8RX22"/>
<dbReference type="PaxDb" id="3702-AT1G32530.1"/>
<dbReference type="ProteomicsDB" id="237114"/>
<dbReference type="EnsemblPlants" id="AT1G32530.1">
    <property type="protein sequence ID" value="AT1G32530.1"/>
    <property type="gene ID" value="AT1G32530"/>
</dbReference>
<dbReference type="GeneID" id="840147"/>
<dbReference type="Gramene" id="AT1G32530.1">
    <property type="protein sequence ID" value="AT1G32530.1"/>
    <property type="gene ID" value="AT1G32530"/>
</dbReference>
<dbReference type="KEGG" id="ath:AT1G32530"/>
<dbReference type="Araport" id="AT1G32530"/>
<dbReference type="TAIR" id="AT1G32530">
    <property type="gene designation" value="PIR2"/>
</dbReference>
<dbReference type="eggNOG" id="ENOG502QVIE">
    <property type="taxonomic scope" value="Eukaryota"/>
</dbReference>
<dbReference type="HOGENOM" id="CLU_012143_0_0_1"/>
<dbReference type="InParanoid" id="Q8RX22"/>
<dbReference type="OMA" id="ACMEESK"/>
<dbReference type="PhylomeDB" id="Q8RX22"/>
<dbReference type="PRO" id="PR:Q8RX22"/>
<dbReference type="Proteomes" id="UP000006548">
    <property type="component" value="Chromosome 1"/>
</dbReference>
<dbReference type="ExpressionAtlas" id="Q8RX22">
    <property type="expression patterns" value="baseline and differential"/>
</dbReference>
<dbReference type="GO" id="GO:0008270">
    <property type="term" value="F:zinc ion binding"/>
    <property type="evidence" value="ECO:0007669"/>
    <property type="project" value="UniProtKB-KW"/>
</dbReference>
<dbReference type="CDD" id="cd23128">
    <property type="entry name" value="RING-HC_MIP1-like"/>
    <property type="match status" value="1"/>
</dbReference>
<dbReference type="Gene3D" id="3.30.40.10">
    <property type="entry name" value="Zinc/RING finger domain, C3HC4 (zinc finger)"/>
    <property type="match status" value="1"/>
</dbReference>
<dbReference type="InterPro" id="IPR046934">
    <property type="entry name" value="PIR2-like"/>
</dbReference>
<dbReference type="InterPro" id="IPR046527">
    <property type="entry name" value="PIR2-like_helical"/>
</dbReference>
<dbReference type="InterPro" id="IPR001841">
    <property type="entry name" value="Znf_RING"/>
</dbReference>
<dbReference type="InterPro" id="IPR013083">
    <property type="entry name" value="Znf_RING/FYVE/PHD"/>
</dbReference>
<dbReference type="PANTHER" id="PTHR46405:SF7">
    <property type="entry name" value="MND1-INTERACTING PROTEIN 1"/>
    <property type="match status" value="1"/>
</dbReference>
<dbReference type="PANTHER" id="PTHR46405">
    <property type="entry name" value="OS05G0141500 PROTEIN"/>
    <property type="match status" value="1"/>
</dbReference>
<dbReference type="Pfam" id="PF20235">
    <property type="entry name" value="PIR2-like_helical"/>
    <property type="match status" value="1"/>
</dbReference>
<dbReference type="Pfam" id="PF13920">
    <property type="entry name" value="zf-C3HC4_3"/>
    <property type="match status" value="1"/>
</dbReference>
<dbReference type="SUPFAM" id="SSF57850">
    <property type="entry name" value="RING/U-box"/>
    <property type="match status" value="1"/>
</dbReference>
<dbReference type="PROSITE" id="PS50089">
    <property type="entry name" value="ZF_RING_2"/>
    <property type="match status" value="1"/>
</dbReference>
<comment type="subunit">
    <text evidence="4">Interacts (via C-terminal domain) with MND1 and HOP2. Interacts with XRI1 (via C-terminal domain).</text>
</comment>
<comment type="interaction">
    <interactant intactId="EBI-2270543">
        <id>Q8RX22</id>
    </interactant>
    <interactant intactId="EBI-1554720">
        <id>Q8GYD2</id>
        <label>MND1</label>
    </interactant>
    <organismsDiffer>false</organismsDiffer>
    <experiments>2</experiments>
</comment>
<comment type="interaction">
    <interactant intactId="EBI-2270543">
        <id>Q8RX22</id>
    </interactant>
    <interactant intactId="EBI-2270660">
        <id>Q6NLW5</id>
        <label>XRI1</label>
    </interactant>
    <organismsDiffer>false</organismsDiffer>
    <experiments>2</experiments>
</comment>
<comment type="sequence caution" evidence="5">
    <conflict type="erroneous gene model prediction">
        <sequence resource="EMBL-CDS" id="AAF81351"/>
    </conflict>
</comment>
<proteinExistence type="evidence at protein level"/>
<reference key="1">
    <citation type="journal article" date="2000" name="Nature">
        <title>Sequence and analysis of chromosome 1 of the plant Arabidopsis thaliana.</title>
        <authorList>
            <person name="Theologis A."/>
            <person name="Ecker J.R."/>
            <person name="Palm C.J."/>
            <person name="Federspiel N.A."/>
            <person name="Kaul S."/>
            <person name="White O."/>
            <person name="Alonso J."/>
            <person name="Altafi H."/>
            <person name="Araujo R."/>
            <person name="Bowman C.L."/>
            <person name="Brooks S.Y."/>
            <person name="Buehler E."/>
            <person name="Chan A."/>
            <person name="Chao Q."/>
            <person name="Chen H."/>
            <person name="Cheuk R.F."/>
            <person name="Chin C.W."/>
            <person name="Chung M.K."/>
            <person name="Conn L."/>
            <person name="Conway A.B."/>
            <person name="Conway A.R."/>
            <person name="Creasy T.H."/>
            <person name="Dewar K."/>
            <person name="Dunn P."/>
            <person name="Etgu P."/>
            <person name="Feldblyum T.V."/>
            <person name="Feng J.-D."/>
            <person name="Fong B."/>
            <person name="Fujii C.Y."/>
            <person name="Gill J.E."/>
            <person name="Goldsmith A.D."/>
            <person name="Haas B."/>
            <person name="Hansen N.F."/>
            <person name="Hughes B."/>
            <person name="Huizar L."/>
            <person name="Hunter J.L."/>
            <person name="Jenkins J."/>
            <person name="Johnson-Hopson C."/>
            <person name="Khan S."/>
            <person name="Khaykin E."/>
            <person name="Kim C.J."/>
            <person name="Koo H.L."/>
            <person name="Kremenetskaia I."/>
            <person name="Kurtz D.B."/>
            <person name="Kwan A."/>
            <person name="Lam B."/>
            <person name="Langin-Hooper S."/>
            <person name="Lee A."/>
            <person name="Lee J.M."/>
            <person name="Lenz C.A."/>
            <person name="Li J.H."/>
            <person name="Li Y.-P."/>
            <person name="Lin X."/>
            <person name="Liu S.X."/>
            <person name="Liu Z.A."/>
            <person name="Luros J.S."/>
            <person name="Maiti R."/>
            <person name="Marziali A."/>
            <person name="Militscher J."/>
            <person name="Miranda M."/>
            <person name="Nguyen M."/>
            <person name="Nierman W.C."/>
            <person name="Osborne B.I."/>
            <person name="Pai G."/>
            <person name="Peterson J."/>
            <person name="Pham P.K."/>
            <person name="Rizzo M."/>
            <person name="Rooney T."/>
            <person name="Rowley D."/>
            <person name="Sakano H."/>
            <person name="Salzberg S.L."/>
            <person name="Schwartz J.R."/>
            <person name="Shinn P."/>
            <person name="Southwick A.M."/>
            <person name="Sun H."/>
            <person name="Tallon L.J."/>
            <person name="Tambunga G."/>
            <person name="Toriumi M.J."/>
            <person name="Town C.D."/>
            <person name="Utterback T."/>
            <person name="Van Aken S."/>
            <person name="Vaysberg M."/>
            <person name="Vysotskaia V.S."/>
            <person name="Walker M."/>
            <person name="Wu D."/>
            <person name="Yu G."/>
            <person name="Fraser C.M."/>
            <person name="Venter J.C."/>
            <person name="Davis R.W."/>
        </authorList>
    </citation>
    <scope>NUCLEOTIDE SEQUENCE [LARGE SCALE GENOMIC DNA]</scope>
    <source>
        <strain>cv. Columbia</strain>
    </source>
</reference>
<reference key="2">
    <citation type="journal article" date="2017" name="Plant J.">
        <title>Araport11: a complete reannotation of the Arabidopsis thaliana reference genome.</title>
        <authorList>
            <person name="Cheng C.Y."/>
            <person name="Krishnakumar V."/>
            <person name="Chan A.P."/>
            <person name="Thibaud-Nissen F."/>
            <person name="Schobel S."/>
            <person name="Town C.D."/>
        </authorList>
    </citation>
    <scope>GENOME REANNOTATION</scope>
    <source>
        <strain>cv. Columbia</strain>
    </source>
</reference>
<reference key="3">
    <citation type="journal article" date="2003" name="Science">
        <title>Empirical analysis of transcriptional activity in the Arabidopsis genome.</title>
        <authorList>
            <person name="Yamada K."/>
            <person name="Lim J."/>
            <person name="Dale J.M."/>
            <person name="Chen H."/>
            <person name="Shinn P."/>
            <person name="Palm C.J."/>
            <person name="Southwick A.M."/>
            <person name="Wu H.C."/>
            <person name="Kim C.J."/>
            <person name="Nguyen M."/>
            <person name="Pham P.K."/>
            <person name="Cheuk R.F."/>
            <person name="Karlin-Newmann G."/>
            <person name="Liu S.X."/>
            <person name="Lam B."/>
            <person name="Sakano H."/>
            <person name="Wu T."/>
            <person name="Yu G."/>
            <person name="Miranda M."/>
            <person name="Quach H.L."/>
            <person name="Tripp M."/>
            <person name="Chang C.H."/>
            <person name="Lee J.M."/>
            <person name="Toriumi M.J."/>
            <person name="Chan M.M."/>
            <person name="Tang C.C."/>
            <person name="Onodera C.S."/>
            <person name="Deng J.M."/>
            <person name="Akiyama K."/>
            <person name="Ansari Y."/>
            <person name="Arakawa T."/>
            <person name="Banh J."/>
            <person name="Banno F."/>
            <person name="Bowser L."/>
            <person name="Brooks S.Y."/>
            <person name="Carninci P."/>
            <person name="Chao Q."/>
            <person name="Choy N."/>
            <person name="Enju A."/>
            <person name="Goldsmith A.D."/>
            <person name="Gurjal M."/>
            <person name="Hansen N.F."/>
            <person name="Hayashizaki Y."/>
            <person name="Johnson-Hopson C."/>
            <person name="Hsuan V.W."/>
            <person name="Iida K."/>
            <person name="Karnes M."/>
            <person name="Khan S."/>
            <person name="Koesema E."/>
            <person name="Ishida J."/>
            <person name="Jiang P.X."/>
            <person name="Jones T."/>
            <person name="Kawai J."/>
            <person name="Kamiya A."/>
            <person name="Meyers C."/>
            <person name="Nakajima M."/>
            <person name="Narusaka M."/>
            <person name="Seki M."/>
            <person name="Sakurai T."/>
            <person name="Satou M."/>
            <person name="Tamse R."/>
            <person name="Vaysberg M."/>
            <person name="Wallender E.K."/>
            <person name="Wong C."/>
            <person name="Yamamura Y."/>
            <person name="Yuan S."/>
            <person name="Shinozaki K."/>
            <person name="Davis R.W."/>
            <person name="Theologis A."/>
            <person name="Ecker J.R."/>
        </authorList>
    </citation>
    <scope>NUCLEOTIDE SEQUENCE [LARGE SCALE MRNA]</scope>
    <source>
        <strain>cv. Columbia</strain>
    </source>
</reference>
<reference key="4">
    <citation type="journal article" date="2009" name="Plant J.">
        <title>A novel ATM dependant X-ray inducible gene is essential for both plant meiosis and gametogenesis.</title>
        <authorList>
            <person name="Dean P.J."/>
            <person name="Siwiec T."/>
            <person name="Waterworth W.M."/>
            <person name="Schloegelhofer P."/>
            <person name="Armstrong S.J."/>
            <person name="West C.E."/>
        </authorList>
    </citation>
    <scope>INTERACTION WITH MND1; HOP2 AND XRI1</scope>
</reference>
<sequence length="711" mass="79328">MGCTVREKHVKPTRRIKAAAFRSDPPLCWVEKIAMSQSIVENLVYHPGLTDSGSVNLNSVTENPEENFWAYCTEEHLEEILLKHLEFLYNQAVSKLLELGYEERVALKAVLSNGHCYGELDVLTNIVNNSLSYLNSGGGGGGSNGNGEDRTETGFTDLRDLEEYSLAGMIYLLQQVKPNLSKGDAMWCLLMSELHVGRASTLDVPTNRSSCCTKEDSNVEDVGTGGTLDIAGFMAPALCRFHGGWGFGNGGGPEFSGNGFSMKGAELKLQREIDCPKRFNLSPSMKSLLKRNVAAFAAGYRASMKQKQIQSSDTIGDSKACNDPAIVKSCGQQPRKSGSEESVSTVLEKFRDLNLDDNLESVGVDDKDCVIVDLLHQVKDFEKKVKERKEWAQKNAMQAAQKVSEELAELKTLSSEREGIQLLKKGKQAVEESTAKRFTDKEIELRKACSQNDRANVIVRKLENQNAEIRAEREGSKLSASESLKACMEASKKEKKCLKKLVAWEKQILKLQDEITAEKEKIKALYKTLAQITEYEKEIEAKWRQEQKAKEEALAQMEEEQRSKEAAEGHNKRKLETLRLKIELDFQRHKDDHQRLEQELGRLKASSDSDSSHISNNAWKPKKSQGENIAKLLEEIDKLEGSYDNEANYDRECIICMKDEVSVVFLPCAHQVVCGSCSDSFFASNNGGSKVTCPCCRGLVQQRIRIFGATS</sequence>
<keyword id="KW-0175">Coiled coil</keyword>
<keyword id="KW-0479">Metal-binding</keyword>
<keyword id="KW-1185">Reference proteome</keyword>
<keyword id="KW-0862">Zinc</keyword>
<keyword id="KW-0863">Zinc-finger</keyword>
<accession>Q8RX22</accession>
<accession>Q9C7Y6</accession>
<accession>Q9LQK4</accession>
<gene>
    <name type="primary">MIP1</name>
    <name type="ordered locus">At1g32530</name>
    <name type="ORF">F5D14.31</name>
    <name type="ORF">T9G5.5</name>
</gene>
<evidence type="ECO:0000255" key="1"/>
<evidence type="ECO:0000255" key="2">
    <source>
        <dbReference type="PROSITE-ProRule" id="PRU00175"/>
    </source>
</evidence>
<evidence type="ECO:0000256" key="3">
    <source>
        <dbReference type="SAM" id="MobiDB-lite"/>
    </source>
</evidence>
<evidence type="ECO:0000269" key="4">
    <source>
    </source>
</evidence>
<evidence type="ECO:0000305" key="5"/>